<gene>
    <name evidence="1" type="primary">proB</name>
    <name type="ordered locus">CV_4212</name>
</gene>
<protein>
    <recommendedName>
        <fullName evidence="1">Glutamate 5-kinase</fullName>
        <ecNumber evidence="1">2.7.2.11</ecNumber>
    </recommendedName>
    <alternativeName>
        <fullName evidence="1">Gamma-glutamyl kinase</fullName>
        <shortName evidence="1">GK</shortName>
    </alternativeName>
</protein>
<comment type="function">
    <text evidence="1">Catalyzes the transfer of a phosphate group to glutamate to form L-glutamate 5-phosphate.</text>
</comment>
<comment type="catalytic activity">
    <reaction evidence="1">
        <text>L-glutamate + ATP = L-glutamyl 5-phosphate + ADP</text>
        <dbReference type="Rhea" id="RHEA:14877"/>
        <dbReference type="ChEBI" id="CHEBI:29985"/>
        <dbReference type="ChEBI" id="CHEBI:30616"/>
        <dbReference type="ChEBI" id="CHEBI:58274"/>
        <dbReference type="ChEBI" id="CHEBI:456216"/>
        <dbReference type="EC" id="2.7.2.11"/>
    </reaction>
</comment>
<comment type="pathway">
    <text evidence="1">Amino-acid biosynthesis; L-proline biosynthesis; L-glutamate 5-semialdehyde from L-glutamate: step 1/2.</text>
</comment>
<comment type="subcellular location">
    <subcellularLocation>
        <location evidence="1">Cytoplasm</location>
    </subcellularLocation>
</comment>
<comment type="similarity">
    <text evidence="1">Belongs to the glutamate 5-kinase family.</text>
</comment>
<accession>Q7NQC8</accession>
<reference key="1">
    <citation type="journal article" date="2003" name="Proc. Natl. Acad. Sci. U.S.A.">
        <title>The complete genome sequence of Chromobacterium violaceum reveals remarkable and exploitable bacterial adaptability.</title>
        <authorList>
            <person name="Vasconcelos A.T.R."/>
            <person name="de Almeida D.F."/>
            <person name="Hungria M."/>
            <person name="Guimaraes C.T."/>
            <person name="Antonio R.V."/>
            <person name="Almeida F.C."/>
            <person name="de Almeida L.G.P."/>
            <person name="de Almeida R."/>
            <person name="Alves-Gomes J.A."/>
            <person name="Andrade E.M."/>
            <person name="Araripe J."/>
            <person name="de Araujo M.F.F."/>
            <person name="Astolfi-Filho S."/>
            <person name="Azevedo V."/>
            <person name="Baptista A.J."/>
            <person name="Bataus L.A.M."/>
            <person name="Batista J.S."/>
            <person name="Belo A."/>
            <person name="van den Berg C."/>
            <person name="Bogo M."/>
            <person name="Bonatto S."/>
            <person name="Bordignon J."/>
            <person name="Brigido M.M."/>
            <person name="Brito C.A."/>
            <person name="Brocchi M."/>
            <person name="Burity H.A."/>
            <person name="Camargo A.A."/>
            <person name="Cardoso D.D.P."/>
            <person name="Carneiro N.P."/>
            <person name="Carraro D.M."/>
            <person name="Carvalho C.M.B."/>
            <person name="Cascardo J.C.M."/>
            <person name="Cavada B.S."/>
            <person name="Chueire L.M.O."/>
            <person name="Creczynski-Pasa T.B."/>
            <person name="Cunha-Junior N.C."/>
            <person name="Fagundes N."/>
            <person name="Falcao C.L."/>
            <person name="Fantinatti F."/>
            <person name="Farias I.P."/>
            <person name="Felipe M.S.S."/>
            <person name="Ferrari L.P."/>
            <person name="Ferro J.A."/>
            <person name="Ferro M.I.T."/>
            <person name="Franco G.R."/>
            <person name="Freitas N.S.A."/>
            <person name="Furlan L.R."/>
            <person name="Gazzinelli R.T."/>
            <person name="Gomes E.A."/>
            <person name="Goncalves P.R."/>
            <person name="Grangeiro T.B."/>
            <person name="Grattapaglia D."/>
            <person name="Grisard E.C."/>
            <person name="Hanna E.S."/>
            <person name="Jardim S.N."/>
            <person name="Laurino J."/>
            <person name="Leoi L.C.T."/>
            <person name="Lima L.F.A."/>
            <person name="Loureiro M.F."/>
            <person name="Lyra M.C.C.P."/>
            <person name="Madeira H.M.F."/>
            <person name="Manfio G.P."/>
            <person name="Maranhao A.Q."/>
            <person name="Martins W.S."/>
            <person name="di Mauro S.M.Z."/>
            <person name="de Medeiros S.R.B."/>
            <person name="Meissner R.V."/>
            <person name="Moreira M.A.M."/>
            <person name="Nascimento F.F."/>
            <person name="Nicolas M.F."/>
            <person name="Oliveira J.G."/>
            <person name="Oliveira S.C."/>
            <person name="Paixao R.F.C."/>
            <person name="Parente J.A."/>
            <person name="Pedrosa F.O."/>
            <person name="Pena S.D.J."/>
            <person name="Pereira J.O."/>
            <person name="Pereira M."/>
            <person name="Pinto L.S.R.C."/>
            <person name="Pinto L.S."/>
            <person name="Porto J.I.R."/>
            <person name="Potrich D.P."/>
            <person name="Ramalho-Neto C.E."/>
            <person name="Reis A.M.M."/>
            <person name="Rigo L.U."/>
            <person name="Rondinelli E."/>
            <person name="Santos E.B.P."/>
            <person name="Santos F.R."/>
            <person name="Schneider M.P.C."/>
            <person name="Seuanez H.N."/>
            <person name="Silva A.M.R."/>
            <person name="da Silva A.L.C."/>
            <person name="Silva D.W."/>
            <person name="Silva R."/>
            <person name="Simoes I.C."/>
            <person name="Simon D."/>
            <person name="Soares C.M.A."/>
            <person name="Soares R.B.A."/>
            <person name="Souza E.M."/>
            <person name="Souza K.R.L."/>
            <person name="Souza R.C."/>
            <person name="Steffens M.B.R."/>
            <person name="Steindel M."/>
            <person name="Teixeira S.R."/>
            <person name="Urmenyi T."/>
            <person name="Vettore A."/>
            <person name="Wassem R."/>
            <person name="Zaha A."/>
            <person name="Simpson A.J.G."/>
        </authorList>
    </citation>
    <scope>NUCLEOTIDE SEQUENCE [LARGE SCALE GENOMIC DNA]</scope>
    <source>
        <strain>ATCC 12472 / DSM 30191 / JCM 1249 / CCUG 213 / NBRC 12614 / NCIMB 9131 / NCTC 9757 / MK</strain>
    </source>
</reference>
<evidence type="ECO:0000255" key="1">
    <source>
        <dbReference type="HAMAP-Rule" id="MF_00456"/>
    </source>
</evidence>
<dbReference type="EC" id="2.7.2.11" evidence="1"/>
<dbReference type="EMBL" id="AE016825">
    <property type="protein sequence ID" value="AAQ61872.1"/>
    <property type="molecule type" value="Genomic_DNA"/>
</dbReference>
<dbReference type="RefSeq" id="WP_011137758.1">
    <property type="nucleotide sequence ID" value="NC_005085.1"/>
</dbReference>
<dbReference type="SMR" id="Q7NQC8"/>
<dbReference type="STRING" id="243365.CV_4212"/>
<dbReference type="GeneID" id="66366311"/>
<dbReference type="KEGG" id="cvi:CV_4212"/>
<dbReference type="eggNOG" id="COG0263">
    <property type="taxonomic scope" value="Bacteria"/>
</dbReference>
<dbReference type="HOGENOM" id="CLU_025400_2_0_4"/>
<dbReference type="OrthoDB" id="9804434at2"/>
<dbReference type="UniPathway" id="UPA00098">
    <property type="reaction ID" value="UER00359"/>
</dbReference>
<dbReference type="Proteomes" id="UP000001424">
    <property type="component" value="Chromosome"/>
</dbReference>
<dbReference type="GO" id="GO:0005829">
    <property type="term" value="C:cytosol"/>
    <property type="evidence" value="ECO:0007669"/>
    <property type="project" value="TreeGrafter"/>
</dbReference>
<dbReference type="GO" id="GO:0005524">
    <property type="term" value="F:ATP binding"/>
    <property type="evidence" value="ECO:0007669"/>
    <property type="project" value="UniProtKB-KW"/>
</dbReference>
<dbReference type="GO" id="GO:0004349">
    <property type="term" value="F:glutamate 5-kinase activity"/>
    <property type="evidence" value="ECO:0007669"/>
    <property type="project" value="UniProtKB-UniRule"/>
</dbReference>
<dbReference type="GO" id="GO:0003723">
    <property type="term" value="F:RNA binding"/>
    <property type="evidence" value="ECO:0007669"/>
    <property type="project" value="InterPro"/>
</dbReference>
<dbReference type="GO" id="GO:0055129">
    <property type="term" value="P:L-proline biosynthetic process"/>
    <property type="evidence" value="ECO:0007669"/>
    <property type="project" value="UniProtKB-UniRule"/>
</dbReference>
<dbReference type="CDD" id="cd04242">
    <property type="entry name" value="AAK_G5K_ProB"/>
    <property type="match status" value="1"/>
</dbReference>
<dbReference type="CDD" id="cd21157">
    <property type="entry name" value="PUA_G5K"/>
    <property type="match status" value="1"/>
</dbReference>
<dbReference type="FunFam" id="2.30.130.10:FF:000007">
    <property type="entry name" value="Glutamate 5-kinase"/>
    <property type="match status" value="1"/>
</dbReference>
<dbReference type="FunFam" id="3.40.1160.10:FF:000018">
    <property type="entry name" value="Glutamate 5-kinase"/>
    <property type="match status" value="1"/>
</dbReference>
<dbReference type="Gene3D" id="3.40.1160.10">
    <property type="entry name" value="Acetylglutamate kinase-like"/>
    <property type="match status" value="1"/>
</dbReference>
<dbReference type="Gene3D" id="2.30.130.10">
    <property type="entry name" value="PUA domain"/>
    <property type="match status" value="1"/>
</dbReference>
<dbReference type="HAMAP" id="MF_00456">
    <property type="entry name" value="ProB"/>
    <property type="match status" value="1"/>
</dbReference>
<dbReference type="InterPro" id="IPR036393">
    <property type="entry name" value="AceGlu_kinase-like_sf"/>
</dbReference>
<dbReference type="InterPro" id="IPR001048">
    <property type="entry name" value="Asp/Glu/Uridylate_kinase"/>
</dbReference>
<dbReference type="InterPro" id="IPR041739">
    <property type="entry name" value="G5K_ProB"/>
</dbReference>
<dbReference type="InterPro" id="IPR001057">
    <property type="entry name" value="Glu/AcGlu_kinase"/>
</dbReference>
<dbReference type="InterPro" id="IPR011529">
    <property type="entry name" value="Glu_5kinase"/>
</dbReference>
<dbReference type="InterPro" id="IPR005715">
    <property type="entry name" value="Glu_5kinase/COase_Synthase"/>
</dbReference>
<dbReference type="InterPro" id="IPR019797">
    <property type="entry name" value="Glutamate_5-kinase_CS"/>
</dbReference>
<dbReference type="InterPro" id="IPR002478">
    <property type="entry name" value="PUA"/>
</dbReference>
<dbReference type="InterPro" id="IPR015947">
    <property type="entry name" value="PUA-like_sf"/>
</dbReference>
<dbReference type="InterPro" id="IPR036974">
    <property type="entry name" value="PUA_sf"/>
</dbReference>
<dbReference type="NCBIfam" id="TIGR01027">
    <property type="entry name" value="proB"/>
    <property type="match status" value="1"/>
</dbReference>
<dbReference type="PANTHER" id="PTHR43654">
    <property type="entry name" value="GLUTAMATE 5-KINASE"/>
    <property type="match status" value="1"/>
</dbReference>
<dbReference type="PANTHER" id="PTHR43654:SF1">
    <property type="entry name" value="ISOPENTENYL PHOSPHATE KINASE"/>
    <property type="match status" value="1"/>
</dbReference>
<dbReference type="Pfam" id="PF00696">
    <property type="entry name" value="AA_kinase"/>
    <property type="match status" value="1"/>
</dbReference>
<dbReference type="Pfam" id="PF01472">
    <property type="entry name" value="PUA"/>
    <property type="match status" value="1"/>
</dbReference>
<dbReference type="PIRSF" id="PIRSF000729">
    <property type="entry name" value="GK"/>
    <property type="match status" value="1"/>
</dbReference>
<dbReference type="PRINTS" id="PR00474">
    <property type="entry name" value="GLU5KINASE"/>
</dbReference>
<dbReference type="SMART" id="SM00359">
    <property type="entry name" value="PUA"/>
    <property type="match status" value="1"/>
</dbReference>
<dbReference type="SUPFAM" id="SSF53633">
    <property type="entry name" value="Carbamate kinase-like"/>
    <property type="match status" value="1"/>
</dbReference>
<dbReference type="SUPFAM" id="SSF88697">
    <property type="entry name" value="PUA domain-like"/>
    <property type="match status" value="1"/>
</dbReference>
<dbReference type="PROSITE" id="PS00902">
    <property type="entry name" value="GLUTAMATE_5_KINASE"/>
    <property type="match status" value="1"/>
</dbReference>
<dbReference type="PROSITE" id="PS50890">
    <property type="entry name" value="PUA"/>
    <property type="match status" value="1"/>
</dbReference>
<proteinExistence type="inferred from homology"/>
<organism>
    <name type="scientific">Chromobacterium violaceum (strain ATCC 12472 / DSM 30191 / JCM 1249 / CCUG 213 / NBRC 12614 / NCIMB 9131 / NCTC 9757 / MK)</name>
    <dbReference type="NCBI Taxonomy" id="243365"/>
    <lineage>
        <taxon>Bacteria</taxon>
        <taxon>Pseudomonadati</taxon>
        <taxon>Pseudomonadota</taxon>
        <taxon>Betaproteobacteria</taxon>
        <taxon>Neisseriales</taxon>
        <taxon>Chromobacteriaceae</taxon>
        <taxon>Chromobacterium</taxon>
    </lineage>
</organism>
<keyword id="KW-0028">Amino-acid biosynthesis</keyword>
<keyword id="KW-0067">ATP-binding</keyword>
<keyword id="KW-0963">Cytoplasm</keyword>
<keyword id="KW-0418">Kinase</keyword>
<keyword id="KW-0547">Nucleotide-binding</keyword>
<keyword id="KW-0641">Proline biosynthesis</keyword>
<keyword id="KW-1185">Reference proteome</keyword>
<keyword id="KW-0808">Transferase</keyword>
<feature type="chain" id="PRO_0000109659" description="Glutamate 5-kinase">
    <location>
        <begin position="1"/>
        <end position="372"/>
    </location>
</feature>
<feature type="domain" description="PUA" evidence="1">
    <location>
        <begin position="280"/>
        <end position="358"/>
    </location>
</feature>
<feature type="binding site" evidence="1">
    <location>
        <position position="14"/>
    </location>
    <ligand>
        <name>ATP</name>
        <dbReference type="ChEBI" id="CHEBI:30616"/>
    </ligand>
</feature>
<feature type="binding site" evidence="1">
    <location>
        <position position="54"/>
    </location>
    <ligand>
        <name>substrate</name>
    </ligand>
</feature>
<feature type="binding site" evidence="1">
    <location>
        <position position="141"/>
    </location>
    <ligand>
        <name>substrate</name>
    </ligand>
</feature>
<feature type="binding site" evidence="1">
    <location>
        <position position="153"/>
    </location>
    <ligand>
        <name>substrate</name>
    </ligand>
</feature>
<feature type="binding site" evidence="1">
    <location>
        <begin position="173"/>
        <end position="174"/>
    </location>
    <ligand>
        <name>ATP</name>
        <dbReference type="ChEBI" id="CHEBI:30616"/>
    </ligand>
</feature>
<feature type="binding site" evidence="1">
    <location>
        <begin position="215"/>
        <end position="221"/>
    </location>
    <ligand>
        <name>ATP</name>
        <dbReference type="ChEBI" id="CHEBI:30616"/>
    </ligand>
</feature>
<name>PROB_CHRVO</name>
<sequence length="372" mass="39674">MHSVIHASDRIVVKVGSSLVTNDGRGLDLNALARWAEEVAELKRRGKQVVLVSSGAIAEGCQRLGWTVRPKGVHELQAAAAVGQMGLCQAYESAFRSFGLRTAQILLTHEDLADRTRYLNARSTLTSLLNLNVVPIINENDTVATSEIRFGDNDTLGALVTNLIEADALVILTDQRGLYSADPRKHPDAEFIHQAEAGDERLEDMAGGAGSSVGTGGMITKILAAKRAARSGAATVIASGREPHVLSRLADGEAIGTQLVAATNRMAARKQWLADHLKLAGRLLLDDGAALAIRERGTSLLPVGVSAVEGDFLRGEAVACVDAAGHEVARGLVNYSSDEARQIMRKSTREIEAALGYIVEPELIHRDNMVAL</sequence>